<proteinExistence type="inferred from homology"/>
<sequence>MKINLNNMVTESRNPASANIDTLPTLEMLKLINDEDKKVALAVEQTLPKIAETVDKIAEAFRQGGRLIYIGAGTSGRLGILDASECPPTYGTKPEQVVGLIAGGHQAILHAVENAEDNQQLGANDLQALHFNSKDVLVGIAASGRTPYVLGAMTYAKSVGATVACISCNPESPMTQAADIAIAPIVGPEIVTGSSRMKAGTAQKLILNMLTTGAMIRTGKVYSNLMVDVEATNAKLVERQKNIVIAATECNREQAEQALAECDGHCKTAIVMILAGINAQQAKTLLKKHHGFIRPTISAVR</sequence>
<gene>
    <name evidence="1" type="primary">murQ</name>
    <name type="ordered locus">plu0403</name>
</gene>
<evidence type="ECO:0000255" key="1">
    <source>
        <dbReference type="HAMAP-Rule" id="MF_00068"/>
    </source>
</evidence>
<organism>
    <name type="scientific">Photorhabdus laumondii subsp. laumondii (strain DSM 15139 / CIP 105565 / TT01)</name>
    <name type="common">Photorhabdus luminescens subsp. laumondii</name>
    <dbReference type="NCBI Taxonomy" id="243265"/>
    <lineage>
        <taxon>Bacteria</taxon>
        <taxon>Pseudomonadati</taxon>
        <taxon>Pseudomonadota</taxon>
        <taxon>Gammaproteobacteria</taxon>
        <taxon>Enterobacterales</taxon>
        <taxon>Morganellaceae</taxon>
        <taxon>Photorhabdus</taxon>
    </lineage>
</organism>
<comment type="function">
    <text evidence="1">Specifically catalyzes the cleavage of the D-lactyl ether substituent of MurNAc 6-phosphate, producing GlcNAc 6-phosphate and D-lactate. Together with AnmK, is also required for the utilization of anhydro-N-acetylmuramic acid (anhMurNAc) either imported from the medium or derived from its own cell wall murein, and thus plays a role in cell wall recycling.</text>
</comment>
<comment type="catalytic activity">
    <reaction evidence="1">
        <text>N-acetyl-D-muramate 6-phosphate + H2O = N-acetyl-D-glucosamine 6-phosphate + (R)-lactate</text>
        <dbReference type="Rhea" id="RHEA:26410"/>
        <dbReference type="ChEBI" id="CHEBI:15377"/>
        <dbReference type="ChEBI" id="CHEBI:16004"/>
        <dbReference type="ChEBI" id="CHEBI:57513"/>
        <dbReference type="ChEBI" id="CHEBI:58722"/>
        <dbReference type="EC" id="4.2.1.126"/>
    </reaction>
</comment>
<comment type="pathway">
    <text evidence="1">Amino-sugar metabolism; 1,6-anhydro-N-acetylmuramate degradation.</text>
</comment>
<comment type="pathway">
    <text evidence="1">Amino-sugar metabolism; N-acetylmuramate degradation.</text>
</comment>
<comment type="pathway">
    <text evidence="1">Cell wall biogenesis; peptidoglycan recycling.</text>
</comment>
<comment type="subunit">
    <text evidence="1">Homodimer.</text>
</comment>
<comment type="induction">
    <text evidence="1">Induced by MurNAc 6-phosphate that releases the repressor MurR from the DNA. Repressed by MurR in the absence of MurNAc 6-phosphate.</text>
</comment>
<comment type="miscellaneous">
    <text evidence="1">A lyase-type mechanism (elimination/hydration) is suggested for the cleavage of the lactyl ether bond of MurNAc 6-phosphate, with the formation of an alpha,beta-unsaturated aldehyde intermediate with (E)-stereochemistry, followed by the syn addition of water to give product.</text>
</comment>
<comment type="similarity">
    <text evidence="1">Belongs to the GCKR-like family. MurNAc-6-P etherase subfamily.</text>
</comment>
<name>MURQ_PHOLL</name>
<reference key="1">
    <citation type="journal article" date="2003" name="Nat. Biotechnol.">
        <title>The genome sequence of the entomopathogenic bacterium Photorhabdus luminescens.</title>
        <authorList>
            <person name="Duchaud E."/>
            <person name="Rusniok C."/>
            <person name="Frangeul L."/>
            <person name="Buchrieser C."/>
            <person name="Givaudan A."/>
            <person name="Taourit S."/>
            <person name="Bocs S."/>
            <person name="Boursaux-Eude C."/>
            <person name="Chandler M."/>
            <person name="Charles J.-F."/>
            <person name="Dassa E."/>
            <person name="Derose R."/>
            <person name="Derzelle S."/>
            <person name="Freyssinet G."/>
            <person name="Gaudriault S."/>
            <person name="Medigue C."/>
            <person name="Lanois A."/>
            <person name="Powell K."/>
            <person name="Siguier P."/>
            <person name="Vincent R."/>
            <person name="Wingate V."/>
            <person name="Zouine M."/>
            <person name="Glaser P."/>
            <person name="Boemare N."/>
            <person name="Danchin A."/>
            <person name="Kunst F."/>
        </authorList>
    </citation>
    <scope>NUCLEOTIDE SEQUENCE [LARGE SCALE GENOMIC DNA]</scope>
    <source>
        <strain>DSM 15139 / CIP 105565 / TT01</strain>
    </source>
</reference>
<accession>Q7N9D8</accession>
<keyword id="KW-0119">Carbohydrate metabolism</keyword>
<keyword id="KW-0456">Lyase</keyword>
<keyword id="KW-1185">Reference proteome</keyword>
<dbReference type="EC" id="4.2.1.126" evidence="1"/>
<dbReference type="EMBL" id="BX571860">
    <property type="protein sequence ID" value="CAE12698.1"/>
    <property type="molecule type" value="Genomic_DNA"/>
</dbReference>
<dbReference type="RefSeq" id="WP_011144789.1">
    <property type="nucleotide sequence ID" value="NC_005126.1"/>
</dbReference>
<dbReference type="SMR" id="Q7N9D8"/>
<dbReference type="STRING" id="243265.plu0403"/>
<dbReference type="GeneID" id="48846688"/>
<dbReference type="KEGG" id="plu:plu0403"/>
<dbReference type="eggNOG" id="COG2103">
    <property type="taxonomic scope" value="Bacteria"/>
</dbReference>
<dbReference type="HOGENOM" id="CLU_049049_1_1_6"/>
<dbReference type="OrthoDB" id="9813395at2"/>
<dbReference type="UniPathway" id="UPA00342"/>
<dbReference type="UniPathway" id="UPA00343"/>
<dbReference type="UniPathway" id="UPA00544"/>
<dbReference type="Proteomes" id="UP000002514">
    <property type="component" value="Chromosome"/>
</dbReference>
<dbReference type="GO" id="GO:0097367">
    <property type="term" value="F:carbohydrate derivative binding"/>
    <property type="evidence" value="ECO:0007669"/>
    <property type="project" value="InterPro"/>
</dbReference>
<dbReference type="GO" id="GO:0016835">
    <property type="term" value="F:carbon-oxygen lyase activity"/>
    <property type="evidence" value="ECO:0007669"/>
    <property type="project" value="UniProtKB-UniRule"/>
</dbReference>
<dbReference type="GO" id="GO:0016803">
    <property type="term" value="F:ether hydrolase activity"/>
    <property type="evidence" value="ECO:0007669"/>
    <property type="project" value="TreeGrafter"/>
</dbReference>
<dbReference type="GO" id="GO:0097175">
    <property type="term" value="P:1,6-anhydro-N-acetyl-beta-muramic acid catabolic process"/>
    <property type="evidence" value="ECO:0007669"/>
    <property type="project" value="UniProtKB-UniRule"/>
</dbReference>
<dbReference type="GO" id="GO:0046348">
    <property type="term" value="P:amino sugar catabolic process"/>
    <property type="evidence" value="ECO:0007669"/>
    <property type="project" value="InterPro"/>
</dbReference>
<dbReference type="GO" id="GO:0097173">
    <property type="term" value="P:N-acetylmuramic acid catabolic process"/>
    <property type="evidence" value="ECO:0007669"/>
    <property type="project" value="UniProtKB-UniPathway"/>
</dbReference>
<dbReference type="GO" id="GO:0009254">
    <property type="term" value="P:peptidoglycan turnover"/>
    <property type="evidence" value="ECO:0007669"/>
    <property type="project" value="UniProtKB-UniRule"/>
</dbReference>
<dbReference type="CDD" id="cd05007">
    <property type="entry name" value="SIS_Etherase"/>
    <property type="match status" value="1"/>
</dbReference>
<dbReference type="FunFam" id="1.10.8.1080:FF:000001">
    <property type="entry name" value="N-acetylmuramic acid 6-phosphate etherase"/>
    <property type="match status" value="1"/>
</dbReference>
<dbReference type="FunFam" id="3.40.50.10490:FF:000014">
    <property type="entry name" value="N-acetylmuramic acid 6-phosphate etherase"/>
    <property type="match status" value="1"/>
</dbReference>
<dbReference type="Gene3D" id="1.10.8.1080">
    <property type="match status" value="1"/>
</dbReference>
<dbReference type="Gene3D" id="3.40.50.10490">
    <property type="entry name" value="Glucose-6-phosphate isomerase like protein, domain 1"/>
    <property type="match status" value="1"/>
</dbReference>
<dbReference type="HAMAP" id="MF_00068">
    <property type="entry name" value="MurQ"/>
    <property type="match status" value="1"/>
</dbReference>
<dbReference type="InterPro" id="IPR005488">
    <property type="entry name" value="Etherase_MurQ"/>
</dbReference>
<dbReference type="InterPro" id="IPR005486">
    <property type="entry name" value="Glucokinase_regulatory_CS"/>
</dbReference>
<dbReference type="InterPro" id="IPR040190">
    <property type="entry name" value="MURQ/GCKR"/>
</dbReference>
<dbReference type="InterPro" id="IPR000408">
    <property type="entry name" value="Reg_chr_condens"/>
</dbReference>
<dbReference type="InterPro" id="IPR001347">
    <property type="entry name" value="SIS_dom"/>
</dbReference>
<dbReference type="InterPro" id="IPR046348">
    <property type="entry name" value="SIS_dom_sf"/>
</dbReference>
<dbReference type="NCBIfam" id="TIGR00274">
    <property type="entry name" value="N-acetylmuramic acid 6-phosphate etherase"/>
    <property type="match status" value="1"/>
</dbReference>
<dbReference type="NCBIfam" id="NF003915">
    <property type="entry name" value="PRK05441.1"/>
    <property type="match status" value="1"/>
</dbReference>
<dbReference type="NCBIfam" id="NF009222">
    <property type="entry name" value="PRK12570.1"/>
    <property type="match status" value="1"/>
</dbReference>
<dbReference type="PANTHER" id="PTHR10088">
    <property type="entry name" value="GLUCOKINASE REGULATORY PROTEIN"/>
    <property type="match status" value="1"/>
</dbReference>
<dbReference type="PANTHER" id="PTHR10088:SF4">
    <property type="entry name" value="GLUCOKINASE REGULATORY PROTEIN"/>
    <property type="match status" value="1"/>
</dbReference>
<dbReference type="Pfam" id="PF22645">
    <property type="entry name" value="GKRP_SIS_N"/>
    <property type="match status" value="1"/>
</dbReference>
<dbReference type="SUPFAM" id="SSF53697">
    <property type="entry name" value="SIS domain"/>
    <property type="match status" value="1"/>
</dbReference>
<dbReference type="PROSITE" id="PS01272">
    <property type="entry name" value="GCKR"/>
    <property type="match status" value="1"/>
</dbReference>
<dbReference type="PROSITE" id="PS51464">
    <property type="entry name" value="SIS"/>
    <property type="match status" value="1"/>
</dbReference>
<protein>
    <recommendedName>
        <fullName evidence="1">N-acetylmuramic acid 6-phosphate etherase</fullName>
        <shortName evidence="1">MurNAc-6-P etherase</shortName>
        <ecNumber evidence="1">4.2.1.126</ecNumber>
    </recommendedName>
    <alternativeName>
        <fullName evidence="1">N-acetylmuramic acid 6-phosphate hydrolase</fullName>
    </alternativeName>
    <alternativeName>
        <fullName evidence="1">N-acetylmuramic acid 6-phosphate lyase</fullName>
    </alternativeName>
</protein>
<feature type="chain" id="PRO_0000249639" description="N-acetylmuramic acid 6-phosphate etherase">
    <location>
        <begin position="1"/>
        <end position="301"/>
    </location>
</feature>
<feature type="domain" description="SIS" evidence="1">
    <location>
        <begin position="57"/>
        <end position="220"/>
    </location>
</feature>
<feature type="active site" description="Proton donor" evidence="1">
    <location>
        <position position="85"/>
    </location>
</feature>
<feature type="active site" evidence="1">
    <location>
        <position position="116"/>
    </location>
</feature>